<sequence>MLPTSVSRSLYLKTFRSHLLRAPQIVLKRMSSSIDISKINSWNKEFQSDLTHQLATTVLKNYNADDALLNKTRLQKQDNRVFNTVVSTDSTPVTNQKSSGRCWLFAATNQLRLNVLSELNLKEFELSQAYLFFYDKLEKANYFLDQIVSSADQDIDSRLVQYLLAAPTEDGGQYSMFLNLVKKYGLIPKDLYGDLPYSTTASRKWNSLLTTKLREFAETLRTALKERSADDSIIVTLREQMQREIFRLMSLFMDIPPVQPNEQFTWEYVDKDKKIHTIKSTPLEFASKYAKLDPSTPVSLINDPRHPYGKLIKIDRLGNVLGGDAVIYLNVDNETLSKLVVKRLQNNKAVFFGSHTPKFMDKTTGVMDIELWNYPAIGYNLRQQKASRIRYHESLMTHAMLITGCHVDETSKLPLRYRVENSWGKDSGKDGLYVMTQKYFEEYCFQIVVDINELPKELASKFTSGKEEPIVLPIWDPMGALAK</sequence>
<name>BLH1_YEAS2</name>
<accession>C7GPC1</accession>
<keyword id="KW-0024">Alternative initiation</keyword>
<keyword id="KW-0963">Cytoplasm</keyword>
<keyword id="KW-0238">DNA-binding</keyword>
<keyword id="KW-0378">Hydrolase</keyword>
<keyword id="KW-0496">Mitochondrion</keyword>
<keyword id="KW-0645">Protease</keyword>
<keyword id="KW-0788">Thiol protease</keyword>
<keyword id="KW-0809">Transit peptide</keyword>
<gene>
    <name type="primary">LAP3</name>
    <name type="synonym">BLH1</name>
    <name type="synonym">GAL6</name>
    <name type="synonym">YCP1</name>
    <name type="ORF">C1Q_02128</name>
</gene>
<protein>
    <recommendedName>
        <fullName>Cysteine proteinase 1, mitochondrial</fullName>
        <ecNumber>3.4.22.40</ecNumber>
    </recommendedName>
    <alternativeName>
        <fullName>Bleomycin hydrolase</fullName>
        <shortName>BLM hydrolase</shortName>
    </alternativeName>
    <alternativeName>
        <fullName>Homocysteine-thiolactonase</fullName>
        <shortName>HTLase</shortName>
        <shortName>Hcy-thiolactonase</shortName>
    </alternativeName>
    <alternativeName>
        <fullName>Leucine aminopeptidase 3</fullName>
    </alternativeName>
    <alternativeName>
        <fullName>Y3</fullName>
    </alternativeName>
</protein>
<dbReference type="EC" id="3.4.22.40"/>
<dbReference type="EMBL" id="ACFL01000082">
    <property type="protein sequence ID" value="EEU07356.1"/>
    <property type="status" value="ALT_INIT"/>
    <property type="molecule type" value="Genomic_DNA"/>
</dbReference>
<dbReference type="SMR" id="C7GPC1"/>
<dbReference type="MEROPS" id="C01.085"/>
<dbReference type="OrthoDB" id="16121at4893"/>
<dbReference type="Proteomes" id="UP000008073">
    <property type="component" value="Unassembled WGS sequence"/>
</dbReference>
<dbReference type="GO" id="GO:0005739">
    <property type="term" value="C:mitochondrion"/>
    <property type="evidence" value="ECO:0007669"/>
    <property type="project" value="UniProtKB-SubCell"/>
</dbReference>
<dbReference type="GO" id="GO:0070005">
    <property type="term" value="F:cysteine-type aminopeptidase activity"/>
    <property type="evidence" value="ECO:0007669"/>
    <property type="project" value="InterPro"/>
</dbReference>
<dbReference type="GO" id="GO:0004197">
    <property type="term" value="F:cysteine-type endopeptidase activity"/>
    <property type="evidence" value="ECO:0007669"/>
    <property type="project" value="UniProtKB-EC"/>
</dbReference>
<dbReference type="GO" id="GO:0003677">
    <property type="term" value="F:DNA binding"/>
    <property type="evidence" value="ECO:0007669"/>
    <property type="project" value="UniProtKB-KW"/>
</dbReference>
<dbReference type="GO" id="GO:0043418">
    <property type="term" value="P:homocysteine catabolic process"/>
    <property type="evidence" value="ECO:0007669"/>
    <property type="project" value="TreeGrafter"/>
</dbReference>
<dbReference type="GO" id="GO:0006508">
    <property type="term" value="P:proteolysis"/>
    <property type="evidence" value="ECO:0007669"/>
    <property type="project" value="UniProtKB-KW"/>
</dbReference>
<dbReference type="GO" id="GO:0009636">
    <property type="term" value="P:response to toxic substance"/>
    <property type="evidence" value="ECO:0007669"/>
    <property type="project" value="TreeGrafter"/>
</dbReference>
<dbReference type="CDD" id="cd00585">
    <property type="entry name" value="Peptidase_C1B"/>
    <property type="match status" value="1"/>
</dbReference>
<dbReference type="FunFam" id="3.90.70.10:FF:000091">
    <property type="entry name" value="Aminopeptidase C"/>
    <property type="match status" value="1"/>
</dbReference>
<dbReference type="Gene3D" id="3.90.70.10">
    <property type="entry name" value="Cysteine proteinases"/>
    <property type="match status" value="1"/>
</dbReference>
<dbReference type="InterPro" id="IPR038765">
    <property type="entry name" value="Papain-like_cys_pep_sf"/>
</dbReference>
<dbReference type="InterPro" id="IPR000169">
    <property type="entry name" value="Pept_cys_AS"/>
</dbReference>
<dbReference type="InterPro" id="IPR004134">
    <property type="entry name" value="Peptidase_C1B"/>
</dbReference>
<dbReference type="PANTHER" id="PTHR10363">
    <property type="entry name" value="BLEOMYCIN HYDROLASE"/>
    <property type="match status" value="1"/>
</dbReference>
<dbReference type="PANTHER" id="PTHR10363:SF2">
    <property type="entry name" value="BLEOMYCIN HYDROLASE"/>
    <property type="match status" value="1"/>
</dbReference>
<dbReference type="Pfam" id="PF03051">
    <property type="entry name" value="Peptidase_C1_2"/>
    <property type="match status" value="1"/>
</dbReference>
<dbReference type="PIRSF" id="PIRSF005700">
    <property type="entry name" value="PepC"/>
    <property type="match status" value="1"/>
</dbReference>
<dbReference type="SUPFAM" id="SSF54001">
    <property type="entry name" value="Cysteine proteinases"/>
    <property type="match status" value="1"/>
</dbReference>
<dbReference type="PROSITE" id="PS00139">
    <property type="entry name" value="THIOL_PROTEASE_CYS"/>
    <property type="match status" value="1"/>
</dbReference>
<dbReference type="PROSITE" id="PS00639">
    <property type="entry name" value="THIOL_PROTEASE_HIS"/>
    <property type="match status" value="1"/>
</dbReference>
<evidence type="ECO:0000250" key="1"/>
<evidence type="ECO:0000255" key="2"/>
<evidence type="ECO:0000255" key="3">
    <source>
        <dbReference type="PROSITE-ProRule" id="PRU10088"/>
    </source>
</evidence>
<evidence type="ECO:0000255" key="4">
    <source>
        <dbReference type="PROSITE-ProRule" id="PRU10089"/>
    </source>
</evidence>
<evidence type="ECO:0000305" key="5"/>
<comment type="function">
    <text evidence="1">The normal physiological role of the enzyme is unknown, but it is not essential for the viability of yeast cells. Has aminopeptidase activity, shortening substrate peptides sequentially by 1 amino acid. Has bleomycin hydrolase activity, which can protect the cell from the toxic effects of bleomycin. Has homocysteine-thiolactonase activity, protecting the cell against homocysteine toxicity. Acts as a repressor in the GAL4 regulatory system, but this does not require either the peptidase or nucleic acid-binding activities (By similarity).</text>
</comment>
<comment type="catalytic activity">
    <reaction>
        <text>Inactivates bleomycin B2 (a cytotoxic glycometallopeptide) by hydrolysis of a carboxyamide bond of beta-aminoalanine, but also shows general aminopeptidase activity. The specificity varies somewhat with source, but amino acid arylamides of Met, Leu and Ala are preferred.</text>
        <dbReference type="EC" id="3.4.22.40"/>
    </reaction>
</comment>
<comment type="activity regulation">
    <text evidence="1">Inhibited by E64, a specific inhibitor of cysteine proteases, N-ethylmaleimide, iodacetamide, and mercury and zinc ions.</text>
</comment>
<comment type="subunit">
    <text evidence="1">Homohexamer. Binds to nucleic acids. Binds single-stranded DNA and RNA with higher affinity than double-stranded DNA (By similarity).</text>
</comment>
<comment type="subcellular location">
    <subcellularLocation>
        <location evidence="1">Mitochondrion</location>
    </subcellularLocation>
    <subcellularLocation>
        <location evidence="1">Cytoplasm</location>
    </subcellularLocation>
</comment>
<comment type="alternative products">
    <event type="alternative initiation"/>
    <isoform>
        <id>C7GPC1-1</id>
        <name>Mitochondrial</name>
        <sequence type="displayed"/>
    </isoform>
    <isoform>
        <id>C7GPC1-2</id>
        <name>Cytoplasmic</name>
        <sequence type="described" ref="VSP_038912"/>
    </isoform>
</comment>
<comment type="PTM">
    <text evidence="1">The N-terminus of isoform Cytoplasmic is blocked.</text>
</comment>
<comment type="similarity">
    <text evidence="3 4">Belongs to the peptidase C1 family.</text>
</comment>
<comment type="sequence caution" evidence="5">
    <conflict type="erroneous initiation">
        <sequence resource="EMBL-CDS" id="EEU07356"/>
    </conflict>
</comment>
<reference key="1">
    <citation type="journal article" date="2009" name="Genome Res.">
        <title>Genome structure of a Saccharomyces cerevisiae strain widely used in bioethanol production.</title>
        <authorList>
            <person name="Argueso J.L."/>
            <person name="Carazzolle M.F."/>
            <person name="Mieczkowski P.A."/>
            <person name="Duarte F.M."/>
            <person name="Netto O.V.C."/>
            <person name="Missawa S.K."/>
            <person name="Galzerani F."/>
            <person name="Costa G.G.L."/>
            <person name="Vidal R.O."/>
            <person name="Noronha M.F."/>
            <person name="Dominska M."/>
            <person name="Andrietta M.G.S."/>
            <person name="Andrietta S.R."/>
            <person name="Cunha A.F."/>
            <person name="Gomes L.H."/>
            <person name="Tavares F.C.A."/>
            <person name="Alcarde A.R."/>
            <person name="Dietrich F.S."/>
            <person name="McCusker J.H."/>
            <person name="Petes T.D."/>
            <person name="Pereira G.A.G."/>
        </authorList>
    </citation>
    <scope>NUCLEOTIDE SEQUENCE [LARGE SCALE GENOMIC DNA]</scope>
    <source>
        <strain>JAY291</strain>
    </source>
</reference>
<organism>
    <name type="scientific">Saccharomyces cerevisiae (strain JAY291)</name>
    <name type="common">Baker's yeast</name>
    <dbReference type="NCBI Taxonomy" id="574961"/>
    <lineage>
        <taxon>Eukaryota</taxon>
        <taxon>Fungi</taxon>
        <taxon>Dikarya</taxon>
        <taxon>Ascomycota</taxon>
        <taxon>Saccharomycotina</taxon>
        <taxon>Saccharomycetes</taxon>
        <taxon>Saccharomycetales</taxon>
        <taxon>Saccharomycetaceae</taxon>
        <taxon>Saccharomyces</taxon>
    </lineage>
</organism>
<feature type="transit peptide" description="Mitochondrion" evidence="2">
    <location>
        <begin position="1"/>
        <end position="30"/>
    </location>
</feature>
<feature type="chain" id="PRO_0000393302" description="Cysteine proteinase 1, mitochondrial">
    <location>
        <begin position="31"/>
        <end position="482"/>
    </location>
</feature>
<feature type="propeptide" id="PRO_0000393303" description="Removed in mature form; by autocatalysis" evidence="1">
    <location>
        <position position="483"/>
    </location>
</feature>
<feature type="active site" evidence="1">
    <location>
        <position position="102"/>
    </location>
</feature>
<feature type="active site" evidence="1">
    <location>
        <position position="398"/>
    </location>
</feature>
<feature type="active site" evidence="1">
    <location>
        <position position="421"/>
    </location>
</feature>
<feature type="splice variant" id="VSP_038912" description="In isoform Cytoplasmic." evidence="5">
    <location>
        <begin position="1"/>
        <end position="29"/>
    </location>
</feature>
<proteinExistence type="inferred from homology"/>